<name>SEC13_CANAL</name>
<organism>
    <name type="scientific">Candida albicans (strain SC5314 / ATCC MYA-2876)</name>
    <name type="common">Yeast</name>
    <dbReference type="NCBI Taxonomy" id="237561"/>
    <lineage>
        <taxon>Eukaryota</taxon>
        <taxon>Fungi</taxon>
        <taxon>Dikarya</taxon>
        <taxon>Ascomycota</taxon>
        <taxon>Saccharomycotina</taxon>
        <taxon>Pichiomycetes</taxon>
        <taxon>Debaryomycetaceae</taxon>
        <taxon>Candida/Lodderomyces clade</taxon>
        <taxon>Candida</taxon>
    </lineage>
</organism>
<reference key="1">
    <citation type="journal article" date="2004" name="Proc. Natl. Acad. Sci. U.S.A.">
        <title>The diploid genome sequence of Candida albicans.</title>
        <authorList>
            <person name="Jones T."/>
            <person name="Federspiel N.A."/>
            <person name="Chibana H."/>
            <person name="Dungan J."/>
            <person name="Kalman S."/>
            <person name="Magee B.B."/>
            <person name="Newport G."/>
            <person name="Thorstenson Y.R."/>
            <person name="Agabian N."/>
            <person name="Magee P.T."/>
            <person name="Davis R.W."/>
            <person name="Scherer S."/>
        </authorList>
    </citation>
    <scope>NUCLEOTIDE SEQUENCE [LARGE SCALE GENOMIC DNA]</scope>
    <source>
        <strain>SC5314 / ATCC MYA-2876</strain>
    </source>
</reference>
<reference key="2">
    <citation type="journal article" date="2007" name="Genome Biol.">
        <title>Assembly of the Candida albicans genome into sixteen supercontigs aligned on the eight chromosomes.</title>
        <authorList>
            <person name="van het Hoog M."/>
            <person name="Rast T.J."/>
            <person name="Martchenko M."/>
            <person name="Grindle S."/>
            <person name="Dignard D."/>
            <person name="Hogues H."/>
            <person name="Cuomo C."/>
            <person name="Berriman M."/>
            <person name="Scherer S."/>
            <person name="Magee B.B."/>
            <person name="Whiteway M."/>
            <person name="Chibana H."/>
            <person name="Nantel A."/>
            <person name="Magee P.T."/>
        </authorList>
    </citation>
    <scope>GENOME REANNOTATION</scope>
    <source>
        <strain>SC5314 / ATCC MYA-2876</strain>
    </source>
</reference>
<reference key="3">
    <citation type="journal article" date="2013" name="Genome Biol.">
        <title>Assembly of a phased diploid Candida albicans genome facilitates allele-specific measurements and provides a simple model for repeat and indel structure.</title>
        <authorList>
            <person name="Muzzey D."/>
            <person name="Schwartz K."/>
            <person name="Weissman J.S."/>
            <person name="Sherlock G."/>
        </authorList>
    </citation>
    <scope>NUCLEOTIDE SEQUENCE [LARGE SCALE GENOMIC DNA]</scope>
    <scope>GENOME REANNOTATION</scope>
    <source>
        <strain>SC5314 / ATCC MYA-2876</strain>
    </source>
</reference>
<reference key="4">
    <citation type="journal article" date="2004" name="Proteomics">
        <title>Low virulent strains of Candida albicans: unravelling the antigens for a future vaccine.</title>
        <authorList>
            <person name="Fernandez-Arenas E."/>
            <person name="Molero G."/>
            <person name="Nombela C."/>
            <person name="Diez-Orejas R."/>
            <person name="Gil C."/>
        </authorList>
    </citation>
    <scope>IDENTIFICATION BY MASS SPECTROMETRY</scope>
    <scope>ANTIGENICITY</scope>
</reference>
<protein>
    <recommendedName>
        <fullName>Protein transport protein SEC13</fullName>
    </recommendedName>
</protein>
<accession>Q5AEF2</accession>
<accession>A0A1D8PJN9</accession>
<dbReference type="EMBL" id="CP017625">
    <property type="protein sequence ID" value="AOW28348.1"/>
    <property type="molecule type" value="Genomic_DNA"/>
</dbReference>
<dbReference type="RefSeq" id="XP_720011.2">
    <property type="nucleotide sequence ID" value="XM_714918.2"/>
</dbReference>
<dbReference type="SMR" id="Q5AEF2"/>
<dbReference type="FunCoup" id="Q5AEF2">
    <property type="interactions" value="1135"/>
</dbReference>
<dbReference type="STRING" id="237561.Q5AEF2"/>
<dbReference type="EnsemblFungi" id="C3_03170W_A-T">
    <property type="protein sequence ID" value="C3_03170W_A-T-p1"/>
    <property type="gene ID" value="C3_03170W_A"/>
</dbReference>
<dbReference type="GeneID" id="3638425"/>
<dbReference type="KEGG" id="cal:CAALFM_C303170WA"/>
<dbReference type="CGD" id="CAL0000177077">
    <property type="gene designation" value="SEC13"/>
</dbReference>
<dbReference type="VEuPathDB" id="FungiDB:C3_03170W_A"/>
<dbReference type="eggNOG" id="KOG1332">
    <property type="taxonomic scope" value="Eukaryota"/>
</dbReference>
<dbReference type="HOGENOM" id="CLU_032441_0_0_1"/>
<dbReference type="InParanoid" id="Q5AEF2"/>
<dbReference type="OMA" id="IWKEEGD"/>
<dbReference type="OrthoDB" id="364224at2759"/>
<dbReference type="PRO" id="PR:Q5AEF2"/>
<dbReference type="Proteomes" id="UP000000559">
    <property type="component" value="Chromosome 3"/>
</dbReference>
<dbReference type="GO" id="GO:0030127">
    <property type="term" value="C:COPII vesicle coat"/>
    <property type="evidence" value="ECO:0000318"/>
    <property type="project" value="GO_Central"/>
</dbReference>
<dbReference type="GO" id="GO:0005789">
    <property type="term" value="C:endoplasmic reticulum membrane"/>
    <property type="evidence" value="ECO:0007669"/>
    <property type="project" value="UniProtKB-SubCell"/>
</dbReference>
<dbReference type="GO" id="GO:0061700">
    <property type="term" value="C:GATOR2 complex"/>
    <property type="evidence" value="ECO:0007669"/>
    <property type="project" value="EnsemblFungi"/>
</dbReference>
<dbReference type="GO" id="GO:0031080">
    <property type="term" value="C:nuclear pore outer ring"/>
    <property type="evidence" value="ECO:0000318"/>
    <property type="project" value="GO_Central"/>
</dbReference>
<dbReference type="GO" id="GO:0005198">
    <property type="term" value="F:structural molecule activity"/>
    <property type="evidence" value="ECO:0000318"/>
    <property type="project" value="GO_Central"/>
</dbReference>
<dbReference type="GO" id="GO:0090114">
    <property type="term" value="P:COPII-coated vesicle budding"/>
    <property type="evidence" value="ECO:0000318"/>
    <property type="project" value="GO_Central"/>
</dbReference>
<dbReference type="GO" id="GO:0036503">
    <property type="term" value="P:ERAD pathway"/>
    <property type="evidence" value="ECO:0007669"/>
    <property type="project" value="EnsemblFungi"/>
</dbReference>
<dbReference type="GO" id="GO:0051028">
    <property type="term" value="P:mRNA transport"/>
    <property type="evidence" value="ECO:0007669"/>
    <property type="project" value="UniProtKB-KW"/>
</dbReference>
<dbReference type="GO" id="GO:0051664">
    <property type="term" value="P:nuclear pore localization"/>
    <property type="evidence" value="ECO:0007669"/>
    <property type="project" value="EnsemblFungi"/>
</dbReference>
<dbReference type="GO" id="GO:0045893">
    <property type="term" value="P:positive regulation of DNA-templated transcription"/>
    <property type="evidence" value="ECO:0007669"/>
    <property type="project" value="EnsemblFungi"/>
</dbReference>
<dbReference type="GO" id="GO:1902953">
    <property type="term" value="P:positive regulation of ER to Golgi vesicle-mediated transport"/>
    <property type="evidence" value="ECO:0007669"/>
    <property type="project" value="EnsemblFungi"/>
</dbReference>
<dbReference type="GO" id="GO:0070863">
    <property type="term" value="P:positive regulation of protein exit from endoplasmic reticulum"/>
    <property type="evidence" value="ECO:0007669"/>
    <property type="project" value="EnsemblFungi"/>
</dbReference>
<dbReference type="GO" id="GO:0032008">
    <property type="term" value="P:positive regulation of TOR signaling"/>
    <property type="evidence" value="ECO:0000318"/>
    <property type="project" value="GO_Central"/>
</dbReference>
<dbReference type="GO" id="GO:1904263">
    <property type="term" value="P:positive regulation of TORC1 signaling"/>
    <property type="evidence" value="ECO:0007669"/>
    <property type="project" value="EnsemblFungi"/>
</dbReference>
<dbReference type="GO" id="GO:0032527">
    <property type="term" value="P:protein exit from endoplasmic reticulum"/>
    <property type="evidence" value="ECO:0000318"/>
    <property type="project" value="GO_Central"/>
</dbReference>
<dbReference type="GO" id="GO:0006606">
    <property type="term" value="P:protein import into nucleus"/>
    <property type="evidence" value="ECO:0000318"/>
    <property type="project" value="GO_Central"/>
</dbReference>
<dbReference type="FunFam" id="2.130.10.10:FF:000017">
    <property type="entry name" value="SEC13 homolog (S. cerevisiae)"/>
    <property type="match status" value="1"/>
</dbReference>
<dbReference type="Gene3D" id="2.130.10.10">
    <property type="entry name" value="YVTN repeat-like/Quinoprotein amine dehydrogenase"/>
    <property type="match status" value="1"/>
</dbReference>
<dbReference type="InterPro" id="IPR037363">
    <property type="entry name" value="Sec13/Seh1_fam"/>
</dbReference>
<dbReference type="InterPro" id="IPR015943">
    <property type="entry name" value="WD40/YVTN_repeat-like_dom_sf"/>
</dbReference>
<dbReference type="InterPro" id="IPR036322">
    <property type="entry name" value="WD40_repeat_dom_sf"/>
</dbReference>
<dbReference type="InterPro" id="IPR001680">
    <property type="entry name" value="WD40_rpt"/>
</dbReference>
<dbReference type="PANTHER" id="PTHR11024">
    <property type="entry name" value="NUCLEAR PORE COMPLEX PROTEIN SEC13 / SEH1 FAMILY MEMBER"/>
    <property type="match status" value="1"/>
</dbReference>
<dbReference type="PANTHER" id="PTHR11024:SF2">
    <property type="entry name" value="PROTEIN SEC13 HOMOLOG"/>
    <property type="match status" value="1"/>
</dbReference>
<dbReference type="Pfam" id="PF00400">
    <property type="entry name" value="WD40"/>
    <property type="match status" value="5"/>
</dbReference>
<dbReference type="SMART" id="SM00320">
    <property type="entry name" value="WD40"/>
    <property type="match status" value="6"/>
</dbReference>
<dbReference type="SUPFAM" id="SSF50978">
    <property type="entry name" value="WD40 repeat-like"/>
    <property type="match status" value="1"/>
</dbReference>
<dbReference type="PROSITE" id="PS50082">
    <property type="entry name" value="WD_REPEATS_2"/>
    <property type="match status" value="2"/>
</dbReference>
<dbReference type="PROSITE" id="PS50294">
    <property type="entry name" value="WD_REPEATS_REGION"/>
    <property type="match status" value="1"/>
</dbReference>
<comment type="function">
    <text evidence="2">Component of the coat protein complex II (COPII) which promotes the formation of transport vesicles from the endoplasmic reticulum (ER). The coat has two main functions, the physical deformation of the endoplasmic reticulum membrane into vesicles and the selection of cargo molecules. It also functions as a component of the nuclear pore complex (NPC). NPC components, collectively referred to as nucleoporins (NUPs), can play the role of both NPC structural components and of docking or interaction partners for transiently associated nuclear transport factors. SEC13 is required for efficient mRNA export from the nucleus to the cytoplasm and for correct nuclear pore biogenesis and distribution (By similarity).</text>
</comment>
<comment type="subunit">
    <text evidence="2">The COPII coat is composed of at least 5 proteins: the SEC23/24 complex, the SEC13/31 complex, and the protein SAR1. Component of the nuclear pore complex (NPC). NPC constitutes the exclusive means of nucleocytoplasmic transport. NPCs allow the passive diffusion of ions and small molecules and the active, nuclear transport receptor-mediated bidirectional transport of macromolecules such as proteins, RNAs, ribonucleoparticles (RNPs), and ribosomal subunits across the nuclear envelope. Due to its 8-fold rotational symmetry, all subunits are present with 8 copies or multiples thereof.</text>
</comment>
<comment type="subcellular location">
    <subcellularLocation>
        <location evidence="1">Cytoplasmic vesicle</location>
        <location evidence="1">COPII-coated vesicle membrane</location>
        <topology evidence="1">Peripheral membrane protein</topology>
        <orientation evidence="1">Cytoplasmic side</orientation>
    </subcellularLocation>
    <subcellularLocation>
        <location evidence="1">Endoplasmic reticulum membrane</location>
        <topology evidence="1">Peripheral membrane protein</topology>
        <orientation evidence="1">Cytoplasmic side</orientation>
    </subcellularLocation>
    <subcellularLocation>
        <location evidence="1">Nucleus</location>
        <location evidence="1">Nuclear pore complex</location>
    </subcellularLocation>
</comment>
<comment type="miscellaneous">
    <text>Has antigenic properties.</text>
</comment>
<comment type="similarity">
    <text evidence="3">Belongs to the WD repeat SEC13 family.</text>
</comment>
<proteinExistence type="evidence at protein level"/>
<evidence type="ECO:0000250" key="1"/>
<evidence type="ECO:0000250" key="2">
    <source>
        <dbReference type="UniProtKB" id="Q04491"/>
    </source>
</evidence>
<evidence type="ECO:0000305" key="3"/>
<gene>
    <name type="primary">SEC13</name>
    <name type="ordered locus">CAALFM_C303170WA</name>
    <name type="ORF">CaO19.316</name>
    <name type="ORF">CaO19.7948</name>
</gene>
<feature type="chain" id="PRO_0000295408" description="Protein transport protein SEC13">
    <location>
        <begin position="1"/>
        <end position="298"/>
    </location>
</feature>
<feature type="repeat" description="WD 1">
    <location>
        <begin position="7"/>
        <end position="46"/>
    </location>
</feature>
<feature type="repeat" description="WD 2">
    <location>
        <begin position="52"/>
        <end position="93"/>
    </location>
</feature>
<feature type="repeat" description="WD 3">
    <location>
        <begin position="100"/>
        <end position="141"/>
    </location>
</feature>
<feature type="repeat" description="WD 4">
    <location>
        <begin position="146"/>
        <end position="197"/>
    </location>
</feature>
<feature type="repeat" description="WD 5">
    <location>
        <begin position="204"/>
        <end position="246"/>
    </location>
</feature>
<feature type="repeat" description="WD 6">
    <location>
        <begin position="253"/>
        <end position="292"/>
    </location>
</feature>
<sequence length="298" mass="33014">MVTIGNAHDDLIHDAVLDYYGKRLATCSSDKTIKIFDLDGTDNYKLITTLTGHEGPVWQVSWAHPKFGSILASCSYDGKALIWKEQPETQQWSIIAEHTVHQASVNSVSWAPHELGAVLLCTSSDGKVSVVDFNDDGTTSHVIFDAHAIGANSATWAPVSTSSKDSAALKQQRRIVSCGSDNLAKIWKYDAANNTYVEEAKLEGHTDWVRDVAWSPSNLIRSYIATASQDRTVLIWTQDRDGKWQKQLLTEEKFPDVCWRCSWSLSGNILAVSGGDNKVSLWKENLQGKWESAGEVDQ</sequence>
<keyword id="KW-0968">Cytoplasmic vesicle</keyword>
<keyword id="KW-0256">Endoplasmic reticulum</keyword>
<keyword id="KW-0931">ER-Golgi transport</keyword>
<keyword id="KW-0472">Membrane</keyword>
<keyword id="KW-0509">mRNA transport</keyword>
<keyword id="KW-0906">Nuclear pore complex</keyword>
<keyword id="KW-0539">Nucleus</keyword>
<keyword id="KW-0653">Protein transport</keyword>
<keyword id="KW-1185">Reference proteome</keyword>
<keyword id="KW-0677">Repeat</keyword>
<keyword id="KW-0811">Translocation</keyword>
<keyword id="KW-0813">Transport</keyword>
<keyword id="KW-0853">WD repeat</keyword>